<proteinExistence type="inferred from homology"/>
<comment type="function">
    <text evidence="1">Catalyzes the methylthiolation of an aspartic acid residue of ribosomal protein uS12.</text>
</comment>
<comment type="catalytic activity">
    <reaction evidence="1">
        <text>L-aspartate(89)-[ribosomal protein uS12]-hydrogen + (sulfur carrier)-SH + AH2 + 2 S-adenosyl-L-methionine = 3-methylsulfanyl-L-aspartate(89)-[ribosomal protein uS12]-hydrogen + (sulfur carrier)-H + 5'-deoxyadenosine + L-methionine + A + S-adenosyl-L-homocysteine + 2 H(+)</text>
        <dbReference type="Rhea" id="RHEA:37087"/>
        <dbReference type="Rhea" id="RHEA-COMP:10460"/>
        <dbReference type="Rhea" id="RHEA-COMP:10461"/>
        <dbReference type="Rhea" id="RHEA-COMP:14737"/>
        <dbReference type="Rhea" id="RHEA-COMP:14739"/>
        <dbReference type="ChEBI" id="CHEBI:13193"/>
        <dbReference type="ChEBI" id="CHEBI:15378"/>
        <dbReference type="ChEBI" id="CHEBI:17319"/>
        <dbReference type="ChEBI" id="CHEBI:17499"/>
        <dbReference type="ChEBI" id="CHEBI:29917"/>
        <dbReference type="ChEBI" id="CHEBI:29961"/>
        <dbReference type="ChEBI" id="CHEBI:57844"/>
        <dbReference type="ChEBI" id="CHEBI:57856"/>
        <dbReference type="ChEBI" id="CHEBI:59789"/>
        <dbReference type="ChEBI" id="CHEBI:64428"/>
        <dbReference type="ChEBI" id="CHEBI:73599"/>
        <dbReference type="EC" id="2.8.4.4"/>
    </reaction>
</comment>
<comment type="cofactor">
    <cofactor evidence="1">
        <name>[4Fe-4S] cluster</name>
        <dbReference type="ChEBI" id="CHEBI:49883"/>
    </cofactor>
    <text evidence="1">Binds 2 [4Fe-4S] clusters. One cluster is coordinated with 3 cysteines and an exchangeable S-adenosyl-L-methionine.</text>
</comment>
<comment type="subcellular location">
    <subcellularLocation>
        <location evidence="1">Cytoplasm</location>
    </subcellularLocation>
</comment>
<comment type="similarity">
    <text evidence="1">Belongs to the methylthiotransferase family. RimO subfamily.</text>
</comment>
<gene>
    <name evidence="1" type="primary">rimO</name>
    <name type="ordered locus">RD1_1659</name>
</gene>
<keyword id="KW-0004">4Fe-4S</keyword>
<keyword id="KW-0963">Cytoplasm</keyword>
<keyword id="KW-0408">Iron</keyword>
<keyword id="KW-0411">Iron-sulfur</keyword>
<keyword id="KW-0479">Metal-binding</keyword>
<keyword id="KW-1185">Reference proteome</keyword>
<keyword id="KW-0949">S-adenosyl-L-methionine</keyword>
<keyword id="KW-0808">Transferase</keyword>
<accession>Q169Q9</accession>
<feature type="chain" id="PRO_0000374980" description="Ribosomal protein uS12 methylthiotransferase RimO">
    <location>
        <begin position="1"/>
        <end position="459"/>
    </location>
</feature>
<feature type="domain" description="MTTase N-terminal" evidence="1">
    <location>
        <begin position="27"/>
        <end position="137"/>
    </location>
</feature>
<feature type="domain" description="Radical SAM core" evidence="2">
    <location>
        <begin position="154"/>
        <end position="387"/>
    </location>
</feature>
<feature type="domain" description="TRAM" evidence="1">
    <location>
        <begin position="390"/>
        <end position="457"/>
    </location>
</feature>
<feature type="region of interest" description="Disordered" evidence="3">
    <location>
        <begin position="1"/>
        <end position="28"/>
    </location>
</feature>
<feature type="binding site" evidence="1">
    <location>
        <position position="36"/>
    </location>
    <ligand>
        <name>[4Fe-4S] cluster</name>
        <dbReference type="ChEBI" id="CHEBI:49883"/>
        <label>1</label>
    </ligand>
</feature>
<feature type="binding site" evidence="1">
    <location>
        <position position="72"/>
    </location>
    <ligand>
        <name>[4Fe-4S] cluster</name>
        <dbReference type="ChEBI" id="CHEBI:49883"/>
        <label>1</label>
    </ligand>
</feature>
<feature type="binding site" evidence="1">
    <location>
        <position position="101"/>
    </location>
    <ligand>
        <name>[4Fe-4S] cluster</name>
        <dbReference type="ChEBI" id="CHEBI:49883"/>
        <label>1</label>
    </ligand>
</feature>
<feature type="binding site" evidence="1">
    <location>
        <position position="168"/>
    </location>
    <ligand>
        <name>[4Fe-4S] cluster</name>
        <dbReference type="ChEBI" id="CHEBI:49883"/>
        <label>2</label>
        <note>4Fe-4S-S-AdoMet</note>
    </ligand>
</feature>
<feature type="binding site" evidence="1">
    <location>
        <position position="172"/>
    </location>
    <ligand>
        <name>[4Fe-4S] cluster</name>
        <dbReference type="ChEBI" id="CHEBI:49883"/>
        <label>2</label>
        <note>4Fe-4S-S-AdoMet</note>
    </ligand>
</feature>
<feature type="binding site" evidence="1">
    <location>
        <position position="175"/>
    </location>
    <ligand>
        <name>[4Fe-4S] cluster</name>
        <dbReference type="ChEBI" id="CHEBI:49883"/>
        <label>2</label>
        <note>4Fe-4S-S-AdoMet</note>
    </ligand>
</feature>
<reference key="1">
    <citation type="journal article" date="2007" name="J. Bacteriol.">
        <title>The complete genome sequence of Roseobacter denitrificans reveals a mixotrophic rather than photosynthetic metabolism.</title>
        <authorList>
            <person name="Swingley W.D."/>
            <person name="Sadekar S."/>
            <person name="Mastrian S.D."/>
            <person name="Matthies H.J."/>
            <person name="Hao J."/>
            <person name="Ramos H."/>
            <person name="Acharya C.R."/>
            <person name="Conrad A.L."/>
            <person name="Taylor H.L."/>
            <person name="Dejesa L.C."/>
            <person name="Shah M.K."/>
            <person name="O'Huallachain M.E."/>
            <person name="Lince M.T."/>
            <person name="Blankenship R.E."/>
            <person name="Beatty J.T."/>
            <person name="Touchman J.W."/>
        </authorList>
    </citation>
    <scope>NUCLEOTIDE SEQUENCE [LARGE SCALE GENOMIC DNA]</scope>
    <source>
        <strain>ATCC 33942 / OCh 114</strain>
    </source>
</reference>
<organism>
    <name type="scientific">Roseobacter denitrificans (strain ATCC 33942 / OCh 114)</name>
    <name type="common">Erythrobacter sp. (strain OCh 114)</name>
    <name type="synonym">Roseobacter denitrificans</name>
    <dbReference type="NCBI Taxonomy" id="375451"/>
    <lineage>
        <taxon>Bacteria</taxon>
        <taxon>Pseudomonadati</taxon>
        <taxon>Pseudomonadota</taxon>
        <taxon>Alphaproteobacteria</taxon>
        <taxon>Rhodobacterales</taxon>
        <taxon>Roseobacteraceae</taxon>
        <taxon>Roseobacter</taxon>
    </lineage>
</organism>
<evidence type="ECO:0000255" key="1">
    <source>
        <dbReference type="HAMAP-Rule" id="MF_01865"/>
    </source>
</evidence>
<evidence type="ECO:0000255" key="2">
    <source>
        <dbReference type="PROSITE-ProRule" id="PRU01266"/>
    </source>
</evidence>
<evidence type="ECO:0000256" key="3">
    <source>
        <dbReference type="SAM" id="MobiDB-lite"/>
    </source>
</evidence>
<sequence length="459" mass="50149">MSTNPPDLRPDLAPKARLTQPDRPGQPTIGMVSLGCPKALVDSERILTRLRAEGYGISPDYDGADAVIVNTCGFLDSAKAESLSAIGEALNENGRVIVTGCLGAEPEYITGAHPKVLAVTGPQQYEQVLDAVHAAVPPSPDPFVDLLPATAVSLTPRHFSYLKISEGCNHKCKFCIIPDMRGRLASRPAHAVMREAEKLVDNGVRELLVISQDTSAFGVDIKHAEERGHRAHITDLARDLGSLGAWVRLHYVYPYPHVRQLIPLMADGLVLPYLDIPFQHAHPDVLRRMARPAAAAKTLDEIAAWRAICPDLTLRSTFIVGYPGETEEEFQTLLDWLDEAQLDRVGCFQYENVAGARSNALPDHVPEDVKQDRWNRFMAKSQDISEAKLAAKVAQRLEVIVDEVDADAATCRTKADAPEIDGNLFIDDGHDGLKPGDIVTVEVDEAGEYDLWGRLAPSA</sequence>
<dbReference type="EC" id="2.8.4.4" evidence="1"/>
<dbReference type="EMBL" id="CP000362">
    <property type="protein sequence ID" value="ABG31284.1"/>
    <property type="molecule type" value="Genomic_DNA"/>
</dbReference>
<dbReference type="RefSeq" id="WP_011567904.1">
    <property type="nucleotide sequence ID" value="NC_008209.1"/>
</dbReference>
<dbReference type="SMR" id="Q169Q9"/>
<dbReference type="STRING" id="375451.RD1_1659"/>
<dbReference type="KEGG" id="rde:RD1_1659"/>
<dbReference type="eggNOG" id="COG0621">
    <property type="taxonomic scope" value="Bacteria"/>
</dbReference>
<dbReference type="HOGENOM" id="CLU_018697_0_0_5"/>
<dbReference type="OrthoDB" id="9805215at2"/>
<dbReference type="Proteomes" id="UP000007029">
    <property type="component" value="Chromosome"/>
</dbReference>
<dbReference type="GO" id="GO:0005829">
    <property type="term" value="C:cytosol"/>
    <property type="evidence" value="ECO:0007669"/>
    <property type="project" value="TreeGrafter"/>
</dbReference>
<dbReference type="GO" id="GO:0051539">
    <property type="term" value="F:4 iron, 4 sulfur cluster binding"/>
    <property type="evidence" value="ECO:0007669"/>
    <property type="project" value="UniProtKB-UniRule"/>
</dbReference>
<dbReference type="GO" id="GO:0035599">
    <property type="term" value="F:aspartic acid methylthiotransferase activity"/>
    <property type="evidence" value="ECO:0007669"/>
    <property type="project" value="TreeGrafter"/>
</dbReference>
<dbReference type="GO" id="GO:0046872">
    <property type="term" value="F:metal ion binding"/>
    <property type="evidence" value="ECO:0007669"/>
    <property type="project" value="UniProtKB-KW"/>
</dbReference>
<dbReference type="GO" id="GO:0103039">
    <property type="term" value="F:protein methylthiotransferase activity"/>
    <property type="evidence" value="ECO:0007669"/>
    <property type="project" value="UniProtKB-EC"/>
</dbReference>
<dbReference type="GO" id="GO:0006400">
    <property type="term" value="P:tRNA modification"/>
    <property type="evidence" value="ECO:0007669"/>
    <property type="project" value="InterPro"/>
</dbReference>
<dbReference type="CDD" id="cd01335">
    <property type="entry name" value="Radical_SAM"/>
    <property type="match status" value="1"/>
</dbReference>
<dbReference type="FunFam" id="3.40.50.12160:FF:000002">
    <property type="entry name" value="Ribosomal protein S12 methylthiotransferase RimO"/>
    <property type="match status" value="1"/>
</dbReference>
<dbReference type="FunFam" id="3.80.30.20:FF:000001">
    <property type="entry name" value="tRNA-2-methylthio-N(6)-dimethylallyladenosine synthase 2"/>
    <property type="match status" value="1"/>
</dbReference>
<dbReference type="Gene3D" id="3.40.50.12160">
    <property type="entry name" value="Methylthiotransferase, N-terminal domain"/>
    <property type="match status" value="1"/>
</dbReference>
<dbReference type="Gene3D" id="2.40.50.140">
    <property type="entry name" value="Nucleic acid-binding proteins"/>
    <property type="match status" value="1"/>
</dbReference>
<dbReference type="Gene3D" id="3.80.30.20">
    <property type="entry name" value="tm_1862 like domain"/>
    <property type="match status" value="1"/>
</dbReference>
<dbReference type="HAMAP" id="MF_01865">
    <property type="entry name" value="MTTase_RimO"/>
    <property type="match status" value="1"/>
</dbReference>
<dbReference type="InterPro" id="IPR006638">
    <property type="entry name" value="Elp3/MiaA/NifB-like_rSAM"/>
</dbReference>
<dbReference type="InterPro" id="IPR005839">
    <property type="entry name" value="Methylthiotransferase"/>
</dbReference>
<dbReference type="InterPro" id="IPR013848">
    <property type="entry name" value="Methylthiotransferase_N"/>
</dbReference>
<dbReference type="InterPro" id="IPR038135">
    <property type="entry name" value="Methylthiotransferase_N_sf"/>
</dbReference>
<dbReference type="InterPro" id="IPR012340">
    <property type="entry name" value="NA-bd_OB-fold"/>
</dbReference>
<dbReference type="InterPro" id="IPR005840">
    <property type="entry name" value="Ribosomal_uS12_MeSTrfase_RimO"/>
</dbReference>
<dbReference type="InterPro" id="IPR007197">
    <property type="entry name" value="rSAM"/>
</dbReference>
<dbReference type="InterPro" id="IPR023404">
    <property type="entry name" value="rSAM_horseshoe"/>
</dbReference>
<dbReference type="InterPro" id="IPR002792">
    <property type="entry name" value="TRAM_dom"/>
</dbReference>
<dbReference type="NCBIfam" id="TIGR01125">
    <property type="entry name" value="30S ribosomal protein S12 methylthiotransferase RimO"/>
    <property type="match status" value="1"/>
</dbReference>
<dbReference type="NCBIfam" id="TIGR00089">
    <property type="entry name" value="MiaB/RimO family radical SAM methylthiotransferase"/>
    <property type="match status" value="1"/>
</dbReference>
<dbReference type="PANTHER" id="PTHR43837">
    <property type="entry name" value="RIBOSOMAL PROTEIN S12 METHYLTHIOTRANSFERASE RIMO"/>
    <property type="match status" value="1"/>
</dbReference>
<dbReference type="PANTHER" id="PTHR43837:SF1">
    <property type="entry name" value="RIBOSOMAL PROTEIN US12 METHYLTHIOTRANSFERASE RIMO"/>
    <property type="match status" value="1"/>
</dbReference>
<dbReference type="Pfam" id="PF04055">
    <property type="entry name" value="Radical_SAM"/>
    <property type="match status" value="1"/>
</dbReference>
<dbReference type="Pfam" id="PF18693">
    <property type="entry name" value="TRAM_2"/>
    <property type="match status" value="1"/>
</dbReference>
<dbReference type="Pfam" id="PF00919">
    <property type="entry name" value="UPF0004"/>
    <property type="match status" value="1"/>
</dbReference>
<dbReference type="SFLD" id="SFLDG01082">
    <property type="entry name" value="B12-binding_domain_containing"/>
    <property type="match status" value="1"/>
</dbReference>
<dbReference type="SFLD" id="SFLDS00029">
    <property type="entry name" value="Radical_SAM"/>
    <property type="match status" value="1"/>
</dbReference>
<dbReference type="SFLD" id="SFLDF00274">
    <property type="entry name" value="ribosomal_protein_S12_methylth"/>
    <property type="match status" value="1"/>
</dbReference>
<dbReference type="SMART" id="SM00729">
    <property type="entry name" value="Elp3"/>
    <property type="match status" value="1"/>
</dbReference>
<dbReference type="SUPFAM" id="SSF102114">
    <property type="entry name" value="Radical SAM enzymes"/>
    <property type="match status" value="1"/>
</dbReference>
<dbReference type="PROSITE" id="PS51449">
    <property type="entry name" value="MTTASE_N"/>
    <property type="match status" value="1"/>
</dbReference>
<dbReference type="PROSITE" id="PS51918">
    <property type="entry name" value="RADICAL_SAM"/>
    <property type="match status" value="1"/>
</dbReference>
<dbReference type="PROSITE" id="PS50926">
    <property type="entry name" value="TRAM"/>
    <property type="match status" value="1"/>
</dbReference>
<protein>
    <recommendedName>
        <fullName evidence="1">Ribosomal protein uS12 methylthiotransferase RimO</fullName>
        <shortName evidence="1">uS12 MTTase</shortName>
        <shortName evidence="1">uS12 methylthiotransferase</shortName>
        <ecNumber evidence="1">2.8.4.4</ecNumber>
    </recommendedName>
    <alternativeName>
        <fullName evidence="1">Ribosomal protein uS12 (aspartate-C(3))-methylthiotransferase</fullName>
    </alternativeName>
    <alternativeName>
        <fullName evidence="1">Ribosome maturation factor RimO</fullName>
    </alternativeName>
</protein>
<name>RIMO_ROSDO</name>